<feature type="chain" id="PRO_0000303332" description="tRNA N6-adenosine threonylcarbamoyltransferase">
    <location>
        <begin position="1"/>
        <end position="339"/>
    </location>
</feature>
<feature type="binding site" evidence="1">
    <location>
        <position position="114"/>
    </location>
    <ligand>
        <name>Fe cation</name>
        <dbReference type="ChEBI" id="CHEBI:24875"/>
    </ligand>
</feature>
<feature type="binding site" evidence="1">
    <location>
        <position position="118"/>
    </location>
    <ligand>
        <name>Fe cation</name>
        <dbReference type="ChEBI" id="CHEBI:24875"/>
    </ligand>
</feature>
<feature type="binding site" evidence="1">
    <location>
        <begin position="137"/>
        <end position="141"/>
    </location>
    <ligand>
        <name>substrate</name>
    </ligand>
</feature>
<feature type="binding site" evidence="1">
    <location>
        <position position="170"/>
    </location>
    <ligand>
        <name>substrate</name>
    </ligand>
</feature>
<feature type="binding site" evidence="1">
    <location>
        <position position="183"/>
    </location>
    <ligand>
        <name>substrate</name>
    </ligand>
</feature>
<feature type="binding site" evidence="1">
    <location>
        <position position="187"/>
    </location>
    <ligand>
        <name>substrate</name>
    </ligand>
</feature>
<feature type="binding site" evidence="1">
    <location>
        <position position="277"/>
    </location>
    <ligand>
        <name>substrate</name>
    </ligand>
</feature>
<feature type="binding site" evidence="1">
    <location>
        <position position="305"/>
    </location>
    <ligand>
        <name>Fe cation</name>
        <dbReference type="ChEBI" id="CHEBI:24875"/>
    </ligand>
</feature>
<organism>
    <name type="scientific">Clostridium perfringens (strain SM101 / Type A)</name>
    <dbReference type="NCBI Taxonomy" id="289380"/>
    <lineage>
        <taxon>Bacteria</taxon>
        <taxon>Bacillati</taxon>
        <taxon>Bacillota</taxon>
        <taxon>Clostridia</taxon>
        <taxon>Eubacteriales</taxon>
        <taxon>Clostridiaceae</taxon>
        <taxon>Clostridium</taxon>
    </lineage>
</organism>
<gene>
    <name evidence="1" type="primary">tsaD</name>
    <name type="synonym">gcp</name>
    <name type="ordered locus">CPR_2202</name>
</gene>
<reference key="1">
    <citation type="journal article" date="2006" name="Genome Res.">
        <title>Skewed genomic variability in strains of the toxigenic bacterial pathogen, Clostridium perfringens.</title>
        <authorList>
            <person name="Myers G.S.A."/>
            <person name="Rasko D.A."/>
            <person name="Cheung J.K."/>
            <person name="Ravel J."/>
            <person name="Seshadri R."/>
            <person name="DeBoy R.T."/>
            <person name="Ren Q."/>
            <person name="Varga J."/>
            <person name="Awad M.M."/>
            <person name="Brinkac L.M."/>
            <person name="Daugherty S.C."/>
            <person name="Haft D.H."/>
            <person name="Dodson R.J."/>
            <person name="Madupu R."/>
            <person name="Nelson W.C."/>
            <person name="Rosovitz M.J."/>
            <person name="Sullivan S.A."/>
            <person name="Khouri H."/>
            <person name="Dimitrov G.I."/>
            <person name="Watkins K.L."/>
            <person name="Mulligan S."/>
            <person name="Benton J."/>
            <person name="Radune D."/>
            <person name="Fisher D.J."/>
            <person name="Atkins H.S."/>
            <person name="Hiscox T."/>
            <person name="Jost B.H."/>
            <person name="Billington S.J."/>
            <person name="Songer J.G."/>
            <person name="McClane B.A."/>
            <person name="Titball R.W."/>
            <person name="Rood J.I."/>
            <person name="Melville S.B."/>
            <person name="Paulsen I.T."/>
        </authorList>
    </citation>
    <scope>NUCLEOTIDE SEQUENCE [LARGE SCALE GENOMIC DNA]</scope>
    <source>
        <strain>SM101 / Type A</strain>
    </source>
</reference>
<name>TSAD_CLOPS</name>
<accession>Q0SQV5</accession>
<comment type="function">
    <text evidence="1">Required for the formation of a threonylcarbamoyl group on adenosine at position 37 (t(6)A37) in tRNAs that read codons beginning with adenine. Is involved in the transfer of the threonylcarbamoyl moiety of threonylcarbamoyl-AMP (TC-AMP) to the N6 group of A37, together with TsaE and TsaB. TsaD likely plays a direct catalytic role in this reaction.</text>
</comment>
<comment type="catalytic activity">
    <reaction evidence="1">
        <text>L-threonylcarbamoyladenylate + adenosine(37) in tRNA = N(6)-L-threonylcarbamoyladenosine(37) in tRNA + AMP + H(+)</text>
        <dbReference type="Rhea" id="RHEA:37059"/>
        <dbReference type="Rhea" id="RHEA-COMP:10162"/>
        <dbReference type="Rhea" id="RHEA-COMP:10163"/>
        <dbReference type="ChEBI" id="CHEBI:15378"/>
        <dbReference type="ChEBI" id="CHEBI:73682"/>
        <dbReference type="ChEBI" id="CHEBI:74411"/>
        <dbReference type="ChEBI" id="CHEBI:74418"/>
        <dbReference type="ChEBI" id="CHEBI:456215"/>
        <dbReference type="EC" id="2.3.1.234"/>
    </reaction>
</comment>
<comment type="cofactor">
    <cofactor evidence="1">
        <name>Fe(2+)</name>
        <dbReference type="ChEBI" id="CHEBI:29033"/>
    </cofactor>
    <text evidence="1">Binds 1 Fe(2+) ion per subunit.</text>
</comment>
<comment type="subcellular location">
    <subcellularLocation>
        <location evidence="1">Cytoplasm</location>
    </subcellularLocation>
</comment>
<comment type="similarity">
    <text evidence="1">Belongs to the KAE1 / TsaD family.</text>
</comment>
<protein>
    <recommendedName>
        <fullName evidence="1">tRNA N6-adenosine threonylcarbamoyltransferase</fullName>
        <ecNumber evidence="1">2.3.1.234</ecNumber>
    </recommendedName>
    <alternativeName>
        <fullName evidence="1">N6-L-threonylcarbamoyladenine synthase</fullName>
        <shortName evidence="1">t(6)A synthase</shortName>
    </alternativeName>
    <alternativeName>
        <fullName evidence="1">t(6)A37 threonylcarbamoyladenosine biosynthesis protein TsaD</fullName>
    </alternativeName>
    <alternativeName>
        <fullName evidence="1">tRNA threonylcarbamoyladenosine biosynthesis protein TsaD</fullName>
    </alternativeName>
</protein>
<dbReference type="EC" id="2.3.1.234" evidence="1"/>
<dbReference type="EMBL" id="CP000312">
    <property type="protein sequence ID" value="ABG85422.1"/>
    <property type="molecule type" value="Genomic_DNA"/>
</dbReference>
<dbReference type="RefSeq" id="WP_011593015.1">
    <property type="nucleotide sequence ID" value="NC_008262.1"/>
</dbReference>
<dbReference type="SMR" id="Q0SQV5"/>
<dbReference type="KEGG" id="cpr:CPR_2202"/>
<dbReference type="Proteomes" id="UP000001824">
    <property type="component" value="Chromosome"/>
</dbReference>
<dbReference type="GO" id="GO:0005737">
    <property type="term" value="C:cytoplasm"/>
    <property type="evidence" value="ECO:0007669"/>
    <property type="project" value="UniProtKB-SubCell"/>
</dbReference>
<dbReference type="GO" id="GO:0005506">
    <property type="term" value="F:iron ion binding"/>
    <property type="evidence" value="ECO:0007669"/>
    <property type="project" value="UniProtKB-UniRule"/>
</dbReference>
<dbReference type="GO" id="GO:0061711">
    <property type="term" value="F:N(6)-L-threonylcarbamoyladenine synthase activity"/>
    <property type="evidence" value="ECO:0007669"/>
    <property type="project" value="UniProtKB-EC"/>
</dbReference>
<dbReference type="GO" id="GO:0002949">
    <property type="term" value="P:tRNA threonylcarbamoyladenosine modification"/>
    <property type="evidence" value="ECO:0007669"/>
    <property type="project" value="UniProtKB-UniRule"/>
</dbReference>
<dbReference type="CDD" id="cd24133">
    <property type="entry name" value="ASKHA_NBD_TsaD_bac"/>
    <property type="match status" value="1"/>
</dbReference>
<dbReference type="FunFam" id="3.30.420.40:FF:000012">
    <property type="entry name" value="tRNA N6-adenosine threonylcarbamoyltransferase"/>
    <property type="match status" value="1"/>
</dbReference>
<dbReference type="FunFam" id="3.30.420.40:FF:000040">
    <property type="entry name" value="tRNA N6-adenosine threonylcarbamoyltransferase"/>
    <property type="match status" value="1"/>
</dbReference>
<dbReference type="Gene3D" id="3.30.420.40">
    <property type="match status" value="2"/>
</dbReference>
<dbReference type="HAMAP" id="MF_01445">
    <property type="entry name" value="TsaD"/>
    <property type="match status" value="1"/>
</dbReference>
<dbReference type="InterPro" id="IPR043129">
    <property type="entry name" value="ATPase_NBD"/>
</dbReference>
<dbReference type="InterPro" id="IPR000905">
    <property type="entry name" value="Gcp-like_dom"/>
</dbReference>
<dbReference type="InterPro" id="IPR017861">
    <property type="entry name" value="KAE1/TsaD"/>
</dbReference>
<dbReference type="InterPro" id="IPR017860">
    <property type="entry name" value="Peptidase_M22_CS"/>
</dbReference>
<dbReference type="InterPro" id="IPR022450">
    <property type="entry name" value="TsaD"/>
</dbReference>
<dbReference type="NCBIfam" id="TIGR00329">
    <property type="entry name" value="gcp_kae1"/>
    <property type="match status" value="1"/>
</dbReference>
<dbReference type="NCBIfam" id="TIGR03723">
    <property type="entry name" value="T6A_TsaD_YgjD"/>
    <property type="match status" value="1"/>
</dbReference>
<dbReference type="PANTHER" id="PTHR11735">
    <property type="entry name" value="TRNA N6-ADENOSINE THREONYLCARBAMOYLTRANSFERASE"/>
    <property type="match status" value="1"/>
</dbReference>
<dbReference type="PANTHER" id="PTHR11735:SF6">
    <property type="entry name" value="TRNA N6-ADENOSINE THREONYLCARBAMOYLTRANSFERASE, MITOCHONDRIAL"/>
    <property type="match status" value="1"/>
</dbReference>
<dbReference type="Pfam" id="PF00814">
    <property type="entry name" value="TsaD"/>
    <property type="match status" value="1"/>
</dbReference>
<dbReference type="PRINTS" id="PR00789">
    <property type="entry name" value="OSIALOPTASE"/>
</dbReference>
<dbReference type="SUPFAM" id="SSF53067">
    <property type="entry name" value="Actin-like ATPase domain"/>
    <property type="match status" value="2"/>
</dbReference>
<dbReference type="PROSITE" id="PS01016">
    <property type="entry name" value="GLYCOPROTEASE"/>
    <property type="match status" value="1"/>
</dbReference>
<sequence>MNKKIILAIESSCDETAAAVVVNGREVLSNIISSQIDIHTKFGGVVPEVASRKHIEAINAVVEEALEVAGVTFDDIDAIAVTYGPGLVGALLVGLQYAKGLAYSLDKPLIGVNHIEGHISANFIDHKDLEPPFVCLVVSGGHTFVVHVEDYGKFEIIGETRDDAAGEAFDKVARAVGLGYPGGPKIDKLAKEGNSDAIKFPKANFHDDNLDFSFSGVKSAVLNYLNKMEMKNEEINKADVVASFQKAVVEVLTDNAIKTCKMRKADKIAIAGGVASNSALRENLLREGEKRGIKVLFPSPILCTDNAAMIGSAAYFELLKGNISKMSLNAKPNLRLGER</sequence>
<keyword id="KW-0012">Acyltransferase</keyword>
<keyword id="KW-0963">Cytoplasm</keyword>
<keyword id="KW-0408">Iron</keyword>
<keyword id="KW-0479">Metal-binding</keyword>
<keyword id="KW-0808">Transferase</keyword>
<keyword id="KW-0819">tRNA processing</keyword>
<proteinExistence type="inferred from homology"/>
<evidence type="ECO:0000255" key="1">
    <source>
        <dbReference type="HAMAP-Rule" id="MF_01445"/>
    </source>
</evidence>